<reference key="1">
    <citation type="submission" date="2007-04" db="EMBL/GenBank/DDBJ databases">
        <title>Complete sequence of Shewanella putrefaciens CN-32.</title>
        <authorList>
            <consortium name="US DOE Joint Genome Institute"/>
            <person name="Copeland A."/>
            <person name="Lucas S."/>
            <person name="Lapidus A."/>
            <person name="Barry K."/>
            <person name="Detter J.C."/>
            <person name="Glavina del Rio T."/>
            <person name="Hammon N."/>
            <person name="Israni S."/>
            <person name="Dalin E."/>
            <person name="Tice H."/>
            <person name="Pitluck S."/>
            <person name="Chain P."/>
            <person name="Malfatti S."/>
            <person name="Shin M."/>
            <person name="Vergez L."/>
            <person name="Schmutz J."/>
            <person name="Larimer F."/>
            <person name="Land M."/>
            <person name="Hauser L."/>
            <person name="Kyrpides N."/>
            <person name="Mikhailova N."/>
            <person name="Romine M.F."/>
            <person name="Fredrickson J."/>
            <person name="Tiedje J."/>
            <person name="Richardson P."/>
        </authorList>
    </citation>
    <scope>NUCLEOTIDE SEQUENCE [LARGE SCALE GENOMIC DNA]</scope>
    <source>
        <strain>CN-32 / ATCC BAA-453</strain>
    </source>
</reference>
<accession>A4YBX5</accession>
<sequence length="63" mass="7170">MKASELREKSVEELNAELLGLLREQFNLRMQHATGQLTQTHQLKLVRRNIARVKTIITSKAGA</sequence>
<feature type="chain" id="PRO_1000007601" description="Large ribosomal subunit protein uL29">
    <location>
        <begin position="1"/>
        <end position="63"/>
    </location>
</feature>
<evidence type="ECO:0000255" key="1">
    <source>
        <dbReference type="HAMAP-Rule" id="MF_00374"/>
    </source>
</evidence>
<evidence type="ECO:0000305" key="2"/>
<organism>
    <name type="scientific">Shewanella putrefaciens (strain CN-32 / ATCC BAA-453)</name>
    <dbReference type="NCBI Taxonomy" id="319224"/>
    <lineage>
        <taxon>Bacteria</taxon>
        <taxon>Pseudomonadati</taxon>
        <taxon>Pseudomonadota</taxon>
        <taxon>Gammaproteobacteria</taxon>
        <taxon>Alteromonadales</taxon>
        <taxon>Shewanellaceae</taxon>
        <taxon>Shewanella</taxon>
    </lineage>
</organism>
<comment type="similarity">
    <text evidence="1">Belongs to the universal ribosomal protein uL29 family.</text>
</comment>
<proteinExistence type="inferred from homology"/>
<name>RL29_SHEPC</name>
<keyword id="KW-0687">Ribonucleoprotein</keyword>
<keyword id="KW-0689">Ribosomal protein</keyword>
<dbReference type="EMBL" id="CP000681">
    <property type="protein sequence ID" value="ABP77458.1"/>
    <property type="molecule type" value="Genomic_DNA"/>
</dbReference>
<dbReference type="SMR" id="A4YBX5"/>
<dbReference type="STRING" id="319224.Sputcn32_3751"/>
<dbReference type="KEGG" id="spc:Sputcn32_3751"/>
<dbReference type="eggNOG" id="COG0255">
    <property type="taxonomic scope" value="Bacteria"/>
</dbReference>
<dbReference type="HOGENOM" id="CLU_158491_1_2_6"/>
<dbReference type="GO" id="GO:0022625">
    <property type="term" value="C:cytosolic large ribosomal subunit"/>
    <property type="evidence" value="ECO:0007669"/>
    <property type="project" value="TreeGrafter"/>
</dbReference>
<dbReference type="GO" id="GO:0003735">
    <property type="term" value="F:structural constituent of ribosome"/>
    <property type="evidence" value="ECO:0007669"/>
    <property type="project" value="InterPro"/>
</dbReference>
<dbReference type="GO" id="GO:0006412">
    <property type="term" value="P:translation"/>
    <property type="evidence" value="ECO:0007669"/>
    <property type="project" value="UniProtKB-UniRule"/>
</dbReference>
<dbReference type="CDD" id="cd00427">
    <property type="entry name" value="Ribosomal_L29_HIP"/>
    <property type="match status" value="1"/>
</dbReference>
<dbReference type="FunFam" id="1.10.287.310:FF:000001">
    <property type="entry name" value="50S ribosomal protein L29"/>
    <property type="match status" value="1"/>
</dbReference>
<dbReference type="Gene3D" id="1.10.287.310">
    <property type="match status" value="1"/>
</dbReference>
<dbReference type="HAMAP" id="MF_00374">
    <property type="entry name" value="Ribosomal_uL29"/>
    <property type="match status" value="1"/>
</dbReference>
<dbReference type="InterPro" id="IPR050063">
    <property type="entry name" value="Ribosomal_protein_uL29"/>
</dbReference>
<dbReference type="InterPro" id="IPR001854">
    <property type="entry name" value="Ribosomal_uL29"/>
</dbReference>
<dbReference type="InterPro" id="IPR018254">
    <property type="entry name" value="Ribosomal_uL29_CS"/>
</dbReference>
<dbReference type="InterPro" id="IPR036049">
    <property type="entry name" value="Ribosomal_uL29_sf"/>
</dbReference>
<dbReference type="NCBIfam" id="TIGR00012">
    <property type="entry name" value="L29"/>
    <property type="match status" value="1"/>
</dbReference>
<dbReference type="PANTHER" id="PTHR10916">
    <property type="entry name" value="60S RIBOSOMAL PROTEIN L35/50S RIBOSOMAL PROTEIN L29"/>
    <property type="match status" value="1"/>
</dbReference>
<dbReference type="PANTHER" id="PTHR10916:SF0">
    <property type="entry name" value="LARGE RIBOSOMAL SUBUNIT PROTEIN UL29C"/>
    <property type="match status" value="1"/>
</dbReference>
<dbReference type="Pfam" id="PF00831">
    <property type="entry name" value="Ribosomal_L29"/>
    <property type="match status" value="1"/>
</dbReference>
<dbReference type="SUPFAM" id="SSF46561">
    <property type="entry name" value="Ribosomal protein L29 (L29p)"/>
    <property type="match status" value="1"/>
</dbReference>
<dbReference type="PROSITE" id="PS00579">
    <property type="entry name" value="RIBOSOMAL_L29"/>
    <property type="match status" value="1"/>
</dbReference>
<protein>
    <recommendedName>
        <fullName evidence="1">Large ribosomal subunit protein uL29</fullName>
    </recommendedName>
    <alternativeName>
        <fullName evidence="2">50S ribosomal protein L29</fullName>
    </alternativeName>
</protein>
<gene>
    <name evidence="1" type="primary">rpmC</name>
    <name type="ordered locus">Sputcn32_3751</name>
</gene>